<comment type="function">
    <text evidence="1">Required for the biosynthesis of the tetrasaccharide linkage region of proteoglycans, especially for small proteoglycans in skin fibroblasts.</text>
</comment>
<comment type="catalytic activity">
    <reaction>
        <text>3-O-(beta-D-xylosyl)-L-seryl-[protein] + UDP-alpha-D-galactose = 3-O-(beta-D-galactosyl-(1-&gt;4)-beta-D-xylosyl)-L-seryl-[protein] + UDP + H(+)</text>
        <dbReference type="Rhea" id="RHEA:15297"/>
        <dbReference type="Rhea" id="RHEA-COMP:12567"/>
        <dbReference type="Rhea" id="RHEA-COMP:12570"/>
        <dbReference type="ChEBI" id="CHEBI:15378"/>
        <dbReference type="ChEBI" id="CHEBI:58223"/>
        <dbReference type="ChEBI" id="CHEBI:66914"/>
        <dbReference type="ChEBI" id="CHEBI:132085"/>
        <dbReference type="ChEBI" id="CHEBI:132088"/>
        <dbReference type="EC" id="2.4.1.133"/>
    </reaction>
</comment>
<comment type="cofactor">
    <cofactor evidence="1">
        <name>Mn(2+)</name>
        <dbReference type="ChEBI" id="CHEBI:29035"/>
    </cofactor>
</comment>
<comment type="pathway">
    <text>Protein modification; protein glycosylation.</text>
</comment>
<comment type="subcellular location">
    <subcellularLocation>
        <location evidence="1">Golgi apparatus</location>
        <location evidence="1">Golgi stack membrane</location>
        <topology evidence="1">Single-pass type II membrane protein</topology>
    </subcellularLocation>
    <text evidence="1">Cis cisternae of Golgi stack.</text>
</comment>
<comment type="alternative products">
    <event type="alternative splicing"/>
    <isoform>
        <id>Q8R087-1</id>
        <name>1</name>
        <sequence type="displayed"/>
    </isoform>
    <isoform>
        <id>Q8R087-2</id>
        <name>2</name>
        <sequence type="described" ref="VSP_014231"/>
    </isoform>
</comment>
<comment type="similarity">
    <text evidence="6">Belongs to the glycosyltransferase 7 family.</text>
</comment>
<comment type="online information" name="Functional Glycomics Gateway - GTase">
    <link uri="http://www.functionalglycomics.org/glycomics/molecule/jsp/glycoEnzyme/viewGlycoEnzyme.jsp?gbpId=gt_mou_466"/>
    <text>b4GalT7</text>
</comment>
<sequence>MLPSRRKAAQLPWEDGRARLLPGGLRRKCSIFHLFIAFLLLVFFSLLWLQLSCSGDMAQVTRGQGQETSGPPRACPPEPPPEHWEEDESWGPHRLAVLVPFRERFEELLVFVPHMHRFLSRKRIQHHIYVLNQVDHFRFNRAALINVGFLESSNSTDYIAMHDVDLLPLNEELDYGFPEAGPFHVASPELHPLYHYKTYVGGILLLSKQHYQLCNGMSNRFWGWGREDDEFYRRIKGAGLQLFRPSGITTGYQTFRHLHDPAWRKRDQKRIAAQKQEQFKVDREGGLNTVKYRVDSRTALSIGGAPCTVLNVMLDCDKTATPWCIFG</sequence>
<name>B4GT7_MOUSE</name>
<proteinExistence type="evidence at transcript level"/>
<protein>
    <recommendedName>
        <fullName>Beta-1,4-galactosyltransferase 7</fullName>
        <shortName>Beta-1,4-GalTase 7</shortName>
        <shortName>Beta4Gal-T7</shortName>
        <shortName>b4Gal-T7</shortName>
        <ecNumber>2.4.1.-</ecNumber>
    </recommendedName>
    <alternativeName>
        <fullName>Proteoglycan UDP-galactose:beta-xylose beta1,4-galactosyltransferase I</fullName>
    </alternativeName>
    <alternativeName>
        <fullName>UDP-Gal:beta-GlcNAc beta-1,4-galactosyltransferase 7</fullName>
    </alternativeName>
    <alternativeName>
        <fullName>UDP-galactose:beta-N-acetylglucosamine beta-1,4-galactosyltransferase 7</fullName>
    </alternativeName>
    <alternativeName>
        <fullName>UDP-galactose:beta-xylose beta-1,4-galactosyltransferase</fullName>
    </alternativeName>
    <alternativeName>
        <fullName>XGPT</fullName>
    </alternativeName>
    <alternativeName>
        <fullName>XGalT-1</fullName>
    </alternativeName>
    <alternativeName>
        <fullName>Xylosylprotein 4-beta-galactosyltransferase</fullName>
        <ecNumber>2.4.1.133</ecNumber>
    </alternativeName>
    <alternativeName>
        <fullName>Xylosylprotein beta-1,4-galactosyltransferase</fullName>
    </alternativeName>
</protein>
<keyword id="KW-0025">Alternative splicing</keyword>
<keyword id="KW-0325">Glycoprotein</keyword>
<keyword id="KW-0328">Glycosyltransferase</keyword>
<keyword id="KW-0333">Golgi apparatus</keyword>
<keyword id="KW-0464">Manganese</keyword>
<keyword id="KW-0472">Membrane</keyword>
<keyword id="KW-0479">Metal-binding</keyword>
<keyword id="KW-1185">Reference proteome</keyword>
<keyword id="KW-0735">Signal-anchor</keyword>
<keyword id="KW-0808">Transferase</keyword>
<keyword id="KW-0812">Transmembrane</keyword>
<keyword id="KW-1133">Transmembrane helix</keyword>
<dbReference type="EC" id="2.4.1.-"/>
<dbReference type="EC" id="2.4.1.133"/>
<dbReference type="EMBL" id="BC027195">
    <property type="protein sequence ID" value="AAH27195.1"/>
    <property type="molecule type" value="mRNA"/>
</dbReference>
<dbReference type="EMBL" id="BC055703">
    <property type="protein sequence ID" value="AAH55703.1"/>
    <property type="molecule type" value="mRNA"/>
</dbReference>
<dbReference type="CCDS" id="CCDS26550.1">
    <molecule id="Q8R087-1"/>
</dbReference>
<dbReference type="CCDS" id="CCDS79190.1">
    <molecule id="Q8R087-2"/>
</dbReference>
<dbReference type="RefSeq" id="NP_001298066.1">
    <molecule id="Q8R087-2"/>
    <property type="nucleotide sequence ID" value="NM_001311137.1"/>
</dbReference>
<dbReference type="RefSeq" id="NP_666157.1">
    <molecule id="Q8R087-1"/>
    <property type="nucleotide sequence ID" value="NM_146045.2"/>
</dbReference>
<dbReference type="SMR" id="Q8R087"/>
<dbReference type="BioGRID" id="230009">
    <property type="interactions" value="2"/>
</dbReference>
<dbReference type="FunCoup" id="Q8R087">
    <property type="interactions" value="2455"/>
</dbReference>
<dbReference type="STRING" id="10090.ENSMUSP00000068532"/>
<dbReference type="CAZy" id="GT7">
    <property type="family name" value="Glycosyltransferase Family 7"/>
</dbReference>
<dbReference type="GlyCosmos" id="Q8R087">
    <property type="glycosylation" value="1 site, No reported glycans"/>
</dbReference>
<dbReference type="GlyGen" id="Q8R087">
    <property type="glycosylation" value="1 site"/>
</dbReference>
<dbReference type="PhosphoSitePlus" id="Q8R087"/>
<dbReference type="SwissPalm" id="Q8R087"/>
<dbReference type="PaxDb" id="10090-ENSMUSP00000068532"/>
<dbReference type="ProteomicsDB" id="273592">
    <molecule id="Q8R087-1"/>
</dbReference>
<dbReference type="ProteomicsDB" id="273593">
    <molecule id="Q8R087-2"/>
</dbReference>
<dbReference type="Pumba" id="Q8R087"/>
<dbReference type="Antibodypedia" id="29347">
    <property type="antibodies" value="113 antibodies from 21 providers"/>
</dbReference>
<dbReference type="DNASU" id="218271"/>
<dbReference type="Ensembl" id="ENSMUST00000064701.8">
    <molecule id="Q8R087-1"/>
    <property type="protein sequence ID" value="ENSMUSP00000068532.7"/>
    <property type="gene ID" value="ENSMUSG00000021504.15"/>
</dbReference>
<dbReference type="Ensembl" id="ENSMUST00000100764.10">
    <molecule id="Q8R087-2"/>
    <property type="protein sequence ID" value="ENSMUSP00000098327.4"/>
    <property type="gene ID" value="ENSMUSG00000021504.15"/>
</dbReference>
<dbReference type="GeneID" id="218271"/>
<dbReference type="KEGG" id="mmu:218271"/>
<dbReference type="UCSC" id="uc007qru.1">
    <molecule id="Q8R087-1"/>
    <property type="organism name" value="mouse"/>
</dbReference>
<dbReference type="UCSC" id="uc011yzw.1">
    <molecule id="Q8R087-2"/>
    <property type="organism name" value="mouse"/>
</dbReference>
<dbReference type="AGR" id="MGI:2384987"/>
<dbReference type="CTD" id="11285"/>
<dbReference type="MGI" id="MGI:2384987">
    <property type="gene designation" value="B4galt7"/>
</dbReference>
<dbReference type="VEuPathDB" id="HostDB:ENSMUSG00000021504"/>
<dbReference type="eggNOG" id="KOG3917">
    <property type="taxonomic scope" value="Eukaryota"/>
</dbReference>
<dbReference type="GeneTree" id="ENSGT00940000157712"/>
<dbReference type="InParanoid" id="Q8R087"/>
<dbReference type="OMA" id="NWLFVCG"/>
<dbReference type="OrthoDB" id="6020664at2759"/>
<dbReference type="PhylomeDB" id="Q8R087"/>
<dbReference type="TreeFam" id="TF312834"/>
<dbReference type="Reactome" id="R-MMU-1971475">
    <property type="pathway name" value="A tetrasaccharide linker sequence is required for GAG synthesis"/>
</dbReference>
<dbReference type="UniPathway" id="UPA00378"/>
<dbReference type="BioGRID-ORCS" id="218271">
    <property type="hits" value="8 hits in 80 CRISPR screens"/>
</dbReference>
<dbReference type="ChiTaRS" id="B4galt7">
    <property type="organism name" value="mouse"/>
</dbReference>
<dbReference type="PRO" id="PR:Q8R087"/>
<dbReference type="Proteomes" id="UP000000589">
    <property type="component" value="Chromosome 13"/>
</dbReference>
<dbReference type="RNAct" id="Q8R087">
    <property type="molecule type" value="protein"/>
</dbReference>
<dbReference type="Bgee" id="ENSMUSG00000021504">
    <property type="expression patterns" value="Expressed in saccule of membranous labyrinth and 249 other cell types or tissues"/>
</dbReference>
<dbReference type="ExpressionAtlas" id="Q8R087">
    <property type="expression patterns" value="baseline and differential"/>
</dbReference>
<dbReference type="GO" id="GO:0005794">
    <property type="term" value="C:Golgi apparatus"/>
    <property type="evidence" value="ECO:0000250"/>
    <property type="project" value="UniProtKB"/>
</dbReference>
<dbReference type="GO" id="GO:0032580">
    <property type="term" value="C:Golgi cisterna membrane"/>
    <property type="evidence" value="ECO:0007669"/>
    <property type="project" value="UniProtKB-SubCell"/>
</dbReference>
<dbReference type="GO" id="GO:0016020">
    <property type="term" value="C:membrane"/>
    <property type="evidence" value="ECO:0000250"/>
    <property type="project" value="UniProtKB"/>
</dbReference>
<dbReference type="GO" id="GO:0003831">
    <property type="term" value="F:beta-N-acetylglucosaminylglycopeptide beta-1,4-galactosyltransferase activity"/>
    <property type="evidence" value="ECO:0007669"/>
    <property type="project" value="Ensembl"/>
</dbReference>
<dbReference type="GO" id="GO:0008378">
    <property type="term" value="F:galactosyltransferase activity"/>
    <property type="evidence" value="ECO:0000250"/>
    <property type="project" value="UniProtKB"/>
</dbReference>
<dbReference type="GO" id="GO:0030145">
    <property type="term" value="F:manganese ion binding"/>
    <property type="evidence" value="ECO:0000250"/>
    <property type="project" value="UniProtKB"/>
</dbReference>
<dbReference type="GO" id="GO:0046525">
    <property type="term" value="F:xylosylprotein 4-beta-galactosyltransferase activity"/>
    <property type="evidence" value="ECO:0000315"/>
    <property type="project" value="MGI"/>
</dbReference>
<dbReference type="GO" id="GO:0005975">
    <property type="term" value="P:carbohydrate metabolic process"/>
    <property type="evidence" value="ECO:0007669"/>
    <property type="project" value="InterPro"/>
</dbReference>
<dbReference type="GO" id="GO:0006024">
    <property type="term" value="P:glycosaminoglycan biosynthetic process"/>
    <property type="evidence" value="ECO:0000315"/>
    <property type="project" value="MGI"/>
</dbReference>
<dbReference type="GO" id="GO:0048147">
    <property type="term" value="P:negative regulation of fibroblast proliferation"/>
    <property type="evidence" value="ECO:0000250"/>
    <property type="project" value="UniProtKB"/>
</dbReference>
<dbReference type="GO" id="GO:0006487">
    <property type="term" value="P:protein N-linked glycosylation"/>
    <property type="evidence" value="ECO:0000250"/>
    <property type="project" value="UniProtKB"/>
</dbReference>
<dbReference type="GO" id="GO:0006029">
    <property type="term" value="P:proteoglycan metabolic process"/>
    <property type="evidence" value="ECO:0000250"/>
    <property type="project" value="UniProtKB"/>
</dbReference>
<dbReference type="GO" id="GO:0097435">
    <property type="term" value="P:supramolecular fiber organization"/>
    <property type="evidence" value="ECO:0000250"/>
    <property type="project" value="UniProtKB"/>
</dbReference>
<dbReference type="CDD" id="cd00899">
    <property type="entry name" value="b4GalT"/>
    <property type="match status" value="1"/>
</dbReference>
<dbReference type="FunFam" id="3.90.550.10:FF:000062">
    <property type="entry name" value="beta-1,4-galactosyltransferase 7 isoform X1"/>
    <property type="match status" value="1"/>
</dbReference>
<dbReference type="Gene3D" id="3.90.550.10">
    <property type="entry name" value="Spore Coat Polysaccharide Biosynthesis Protein SpsA, Chain A"/>
    <property type="match status" value="1"/>
</dbReference>
<dbReference type="InterPro" id="IPR003859">
    <property type="entry name" value="Galactosyl_T"/>
</dbReference>
<dbReference type="InterPro" id="IPR027791">
    <property type="entry name" value="Galactosyl_T_C"/>
</dbReference>
<dbReference type="InterPro" id="IPR027995">
    <property type="entry name" value="Galactosyl_T_N"/>
</dbReference>
<dbReference type="InterPro" id="IPR029044">
    <property type="entry name" value="Nucleotide-diphossugar_trans"/>
</dbReference>
<dbReference type="PANTHER" id="PTHR19300">
    <property type="entry name" value="BETA-1,4-GALACTOSYLTRANSFERASE"/>
    <property type="match status" value="1"/>
</dbReference>
<dbReference type="PANTHER" id="PTHR19300:SF30">
    <property type="entry name" value="BETA-1,4-GALACTOSYLTRANSFERASE 7"/>
    <property type="match status" value="1"/>
</dbReference>
<dbReference type="Pfam" id="PF02709">
    <property type="entry name" value="Glyco_transf_7C"/>
    <property type="match status" value="1"/>
</dbReference>
<dbReference type="Pfam" id="PF13733">
    <property type="entry name" value="Glyco_transf_7N"/>
    <property type="match status" value="1"/>
</dbReference>
<dbReference type="PRINTS" id="PR02050">
    <property type="entry name" value="B14GALTRFASE"/>
</dbReference>
<dbReference type="SUPFAM" id="SSF53448">
    <property type="entry name" value="Nucleotide-diphospho-sugar transferases"/>
    <property type="match status" value="1"/>
</dbReference>
<evidence type="ECO:0000250" key="1"/>
<evidence type="ECO:0000250" key="2">
    <source>
        <dbReference type="UniProtKB" id="Q9UBV7"/>
    </source>
</evidence>
<evidence type="ECO:0000255" key="3"/>
<evidence type="ECO:0000256" key="4">
    <source>
        <dbReference type="SAM" id="MobiDB-lite"/>
    </source>
</evidence>
<evidence type="ECO:0000303" key="5">
    <source>
    </source>
</evidence>
<evidence type="ECO:0000305" key="6"/>
<organism>
    <name type="scientific">Mus musculus</name>
    <name type="common">Mouse</name>
    <dbReference type="NCBI Taxonomy" id="10090"/>
    <lineage>
        <taxon>Eukaryota</taxon>
        <taxon>Metazoa</taxon>
        <taxon>Chordata</taxon>
        <taxon>Craniata</taxon>
        <taxon>Vertebrata</taxon>
        <taxon>Euteleostomi</taxon>
        <taxon>Mammalia</taxon>
        <taxon>Eutheria</taxon>
        <taxon>Euarchontoglires</taxon>
        <taxon>Glires</taxon>
        <taxon>Rodentia</taxon>
        <taxon>Myomorpha</taxon>
        <taxon>Muroidea</taxon>
        <taxon>Muridae</taxon>
        <taxon>Murinae</taxon>
        <taxon>Mus</taxon>
        <taxon>Mus</taxon>
    </lineage>
</organism>
<feature type="chain" id="PRO_0000080551" description="Beta-1,4-galactosyltransferase 7">
    <location>
        <begin position="1"/>
        <end position="327"/>
    </location>
</feature>
<feature type="topological domain" description="Cytoplasmic" evidence="3">
    <location>
        <begin position="1"/>
        <end position="30"/>
    </location>
</feature>
<feature type="transmembrane region" description="Helical; Signal-anchor for type II membrane protein" evidence="3">
    <location>
        <begin position="31"/>
        <end position="51"/>
    </location>
</feature>
<feature type="topological domain" description="Lumenal" evidence="3">
    <location>
        <begin position="52"/>
        <end position="327"/>
    </location>
</feature>
<feature type="region of interest" description="Disordered" evidence="4">
    <location>
        <begin position="61"/>
        <end position="88"/>
    </location>
</feature>
<feature type="binding site" evidence="2">
    <location>
        <begin position="100"/>
        <end position="104"/>
    </location>
    <ligand>
        <name>UDP-alpha-D-galactose</name>
        <dbReference type="ChEBI" id="CHEBI:66914"/>
    </ligand>
</feature>
<feature type="binding site" evidence="2">
    <location>
        <begin position="139"/>
        <end position="141"/>
    </location>
    <ligand>
        <name>UDP-alpha-D-galactose</name>
        <dbReference type="ChEBI" id="CHEBI:66914"/>
    </ligand>
</feature>
<feature type="binding site" evidence="2">
    <location>
        <begin position="164"/>
        <end position="165"/>
    </location>
    <ligand>
        <name>UDP-alpha-D-galactose</name>
        <dbReference type="ChEBI" id="CHEBI:66914"/>
    </ligand>
</feature>
<feature type="binding site" evidence="2">
    <location>
        <position position="165"/>
    </location>
    <ligand>
        <name>Mn(2+)</name>
        <dbReference type="ChEBI" id="CHEBI:29035"/>
    </ligand>
</feature>
<feature type="binding site" evidence="2">
    <location>
        <position position="194"/>
    </location>
    <ligand>
        <name>UDP-alpha-D-galactose</name>
        <dbReference type="ChEBI" id="CHEBI:66914"/>
    </ligand>
</feature>
<feature type="binding site" evidence="2">
    <location>
        <position position="224"/>
    </location>
    <ligand>
        <name>UDP-alpha-D-galactose</name>
        <dbReference type="ChEBI" id="CHEBI:66914"/>
    </ligand>
</feature>
<feature type="binding site" evidence="2">
    <location>
        <begin position="226"/>
        <end position="229"/>
    </location>
    <ligand>
        <name>N-acetyl-D-glucosamine</name>
        <dbReference type="ChEBI" id="CHEBI:506227"/>
    </ligand>
</feature>
<feature type="binding site" evidence="2">
    <location>
        <begin position="257"/>
        <end position="259"/>
    </location>
    <ligand>
        <name>UDP-alpha-D-galactose</name>
        <dbReference type="ChEBI" id="CHEBI:66914"/>
    </ligand>
</feature>
<feature type="binding site" evidence="2">
    <location>
        <position position="257"/>
    </location>
    <ligand>
        <name>Mn(2+)</name>
        <dbReference type="ChEBI" id="CHEBI:29035"/>
    </ligand>
</feature>
<feature type="binding site" evidence="2">
    <location>
        <position position="266"/>
    </location>
    <ligand>
        <name>UDP-alpha-D-galactose</name>
        <dbReference type="ChEBI" id="CHEBI:66914"/>
    </ligand>
</feature>
<feature type="glycosylation site" description="N-linked (GlcNAc...) asparagine" evidence="3">
    <location>
        <position position="154"/>
    </location>
</feature>
<feature type="splice variant" id="VSP_014231" description="In isoform 2." evidence="5">
    <location>
        <begin position="241"/>
        <end position="275"/>
    </location>
</feature>
<accession>Q8R087</accession>
<accession>Q7TNU3</accession>
<gene>
    <name type="primary">B4galt7</name>
    <name type="synonym">Xgalt1</name>
</gene>
<reference key="1">
    <citation type="journal article" date="2004" name="Genome Res.">
        <title>The status, quality, and expansion of the NIH full-length cDNA project: the Mammalian Gene Collection (MGC).</title>
        <authorList>
            <consortium name="The MGC Project Team"/>
        </authorList>
    </citation>
    <scope>NUCLEOTIDE SEQUENCE [LARGE SCALE MRNA] (ISOFORMS 1 AND 2)</scope>
    <source>
        <strain>FVB/N</strain>
        <tissue>Brain</tissue>
        <tissue>Colon</tissue>
    </source>
</reference>